<feature type="chain" id="PRO_1000008354" description="Translation initiation factor IF-2">
    <location>
        <begin position="1"/>
        <end position="940"/>
    </location>
</feature>
<feature type="domain" description="tr-type G">
    <location>
        <begin position="442"/>
        <end position="609"/>
    </location>
</feature>
<feature type="region of interest" description="Disordered" evidence="3">
    <location>
        <begin position="48"/>
        <end position="264"/>
    </location>
</feature>
<feature type="region of interest" description="Disordered" evidence="3">
    <location>
        <begin position="278"/>
        <end position="351"/>
    </location>
</feature>
<feature type="region of interest" description="G1" evidence="1">
    <location>
        <begin position="451"/>
        <end position="458"/>
    </location>
</feature>
<feature type="region of interest" description="G2" evidence="1">
    <location>
        <begin position="476"/>
        <end position="480"/>
    </location>
</feature>
<feature type="region of interest" description="G3" evidence="1">
    <location>
        <begin position="497"/>
        <end position="500"/>
    </location>
</feature>
<feature type="region of interest" description="G4" evidence="1">
    <location>
        <begin position="551"/>
        <end position="554"/>
    </location>
</feature>
<feature type="region of interest" description="G5" evidence="1">
    <location>
        <begin position="587"/>
        <end position="589"/>
    </location>
</feature>
<feature type="compositionally biased region" description="Basic and acidic residues" evidence="3">
    <location>
        <begin position="65"/>
        <end position="95"/>
    </location>
</feature>
<feature type="compositionally biased region" description="Basic and acidic residues" evidence="3">
    <location>
        <begin position="112"/>
        <end position="125"/>
    </location>
</feature>
<feature type="compositionally biased region" description="Basic and acidic residues" evidence="3">
    <location>
        <begin position="155"/>
        <end position="206"/>
    </location>
</feature>
<feature type="compositionally biased region" description="Basic and acidic residues" evidence="3">
    <location>
        <begin position="232"/>
        <end position="258"/>
    </location>
</feature>
<feature type="compositionally biased region" description="Basic and acidic residues" evidence="3">
    <location>
        <begin position="292"/>
        <end position="301"/>
    </location>
</feature>
<feature type="compositionally biased region" description="Low complexity" evidence="3">
    <location>
        <begin position="314"/>
        <end position="332"/>
    </location>
</feature>
<feature type="binding site" evidence="2">
    <location>
        <begin position="451"/>
        <end position="458"/>
    </location>
    <ligand>
        <name>GTP</name>
        <dbReference type="ChEBI" id="CHEBI:37565"/>
    </ligand>
</feature>
<feature type="binding site" evidence="2">
    <location>
        <begin position="497"/>
        <end position="501"/>
    </location>
    <ligand>
        <name>GTP</name>
        <dbReference type="ChEBI" id="CHEBI:37565"/>
    </ligand>
</feature>
<feature type="binding site" evidence="2">
    <location>
        <begin position="551"/>
        <end position="554"/>
    </location>
    <ligand>
        <name>GTP</name>
        <dbReference type="ChEBI" id="CHEBI:37565"/>
    </ligand>
</feature>
<accession>A4W3R7</accession>
<protein>
    <recommendedName>
        <fullName evidence="2">Translation initiation factor IF-2</fullName>
    </recommendedName>
</protein>
<comment type="function">
    <text evidence="2">One of the essential components for the initiation of protein synthesis. Protects formylmethionyl-tRNA from spontaneous hydrolysis and promotes its binding to the 30S ribosomal subunits. Also involved in the hydrolysis of GTP during the formation of the 70S ribosomal complex.</text>
</comment>
<comment type="subcellular location">
    <subcellularLocation>
        <location evidence="2">Cytoplasm</location>
    </subcellularLocation>
</comment>
<comment type="similarity">
    <text evidence="2">Belongs to the TRAFAC class translation factor GTPase superfamily. Classic translation factor GTPase family. IF-2 subfamily.</text>
</comment>
<organism>
    <name type="scientific">Streptococcus suis (strain 98HAH33)</name>
    <dbReference type="NCBI Taxonomy" id="391296"/>
    <lineage>
        <taxon>Bacteria</taxon>
        <taxon>Bacillati</taxon>
        <taxon>Bacillota</taxon>
        <taxon>Bacilli</taxon>
        <taxon>Lactobacillales</taxon>
        <taxon>Streptococcaceae</taxon>
        <taxon>Streptococcus</taxon>
    </lineage>
</organism>
<sequence length="940" mass="104075">MSKKRLNEIARELGVSSKEVVAKAQELGFEVKSHASSVDEASAKRLAESFGGQKSEATKVAAKVSKPEKVDETPKVETAKVEKAKETQPVVKEEVAASAVQSASHRPQSRNFKAEREARAKEQAAKRAQNQGKGGQAKSDQDRRDNRQLGQGRSNNERNDRRDNRRDQRPEERKDNRFGDRRDNRDNRRQDNRSGRLARFEQREAAKPAGPKIDFKARAAALKAEQNAEYARTSEERFRQAQEAKKQPKKPKEIKFEEPVVESKPFVKPALVASVPEQVAETTVDTRRKKQARPDKKRDFNSDEEDGPRKQQRNRNSQNQVRNQRTSNWNNNKKNKKGKANQPAKPVTERKFHELPTEFEYTAGMTVAEIAKRIKREPAEIVKKLFLMGVMATQNQSLDGDTIELLMVDYGIEAKEKVEVDNADIERFFVEEGYLNEEEMTERPPVVTIMGHVDHGKTTLLDTLRNSRVATGEAGGITQHIGAYQIEEAGKKITFLDTPGHAAFTSMRARGASVTDLTILVVAADDGVMPQTIEAINHSKAANVPIIVAINKIDKPGANPERVIGELAEHGVISTAWGGESEFVEISAKFNQNIDELLETVLLVAEIQELKADPTVRAIGTVIEAHLDKGKGAVATLLVQQGTLNVQDPIVVGNTFGRVRAMTNDLGRRVKTAGPSTPVSITGLNETPMAGDHFAVYEDEKSARAAGEERAKRALLKQRQATQRVSLENLFDTLKAGEVKSVNVIIKADVQGSVEALASSLQKIEVEGVRVNIVHSAVGAINESDITLAEASNALVIGFNVRPTAEARSQAEADDVEVRLHSIIYKVIEEMEDAMKGMLDPEYEEKIIGEAIIRETFKVSKVGTIGGFMVVRGKVTRDSSVRVIRDGVVVFDGKLASLKRYKDDVKEVGNAQEGGLMIENYNDLKVDDTIEAYIMEEIKK</sequence>
<proteinExistence type="inferred from homology"/>
<name>IF2_STRS2</name>
<keyword id="KW-0963">Cytoplasm</keyword>
<keyword id="KW-0342">GTP-binding</keyword>
<keyword id="KW-0396">Initiation factor</keyword>
<keyword id="KW-0547">Nucleotide-binding</keyword>
<keyword id="KW-0648">Protein biosynthesis</keyword>
<reference key="1">
    <citation type="journal article" date="2007" name="PLoS ONE">
        <title>A glimpse of streptococcal toxic shock syndrome from comparative genomics of S. suis 2 Chinese isolates.</title>
        <authorList>
            <person name="Chen C."/>
            <person name="Tang J."/>
            <person name="Dong W."/>
            <person name="Wang C."/>
            <person name="Feng Y."/>
            <person name="Wang J."/>
            <person name="Zheng F."/>
            <person name="Pan X."/>
            <person name="Liu D."/>
            <person name="Li M."/>
            <person name="Song Y."/>
            <person name="Zhu X."/>
            <person name="Sun H."/>
            <person name="Feng T."/>
            <person name="Guo Z."/>
            <person name="Ju A."/>
            <person name="Ge J."/>
            <person name="Dong Y."/>
            <person name="Sun W."/>
            <person name="Jiang Y."/>
            <person name="Wang J."/>
            <person name="Yan J."/>
            <person name="Yang H."/>
            <person name="Wang X."/>
            <person name="Gao G.F."/>
            <person name="Yang R."/>
            <person name="Wang J."/>
            <person name="Yu J."/>
        </authorList>
    </citation>
    <scope>NUCLEOTIDE SEQUENCE [LARGE SCALE GENOMIC DNA]</scope>
    <source>
        <strain>98HAH33</strain>
    </source>
</reference>
<gene>
    <name evidence="2" type="primary">infB</name>
    <name type="ordered locus">SSU98_1848</name>
</gene>
<evidence type="ECO:0000250" key="1"/>
<evidence type="ECO:0000255" key="2">
    <source>
        <dbReference type="HAMAP-Rule" id="MF_00100"/>
    </source>
</evidence>
<evidence type="ECO:0000256" key="3">
    <source>
        <dbReference type="SAM" id="MobiDB-lite"/>
    </source>
</evidence>
<dbReference type="EMBL" id="CP000408">
    <property type="protein sequence ID" value="ABP93006.1"/>
    <property type="molecule type" value="Genomic_DNA"/>
</dbReference>
<dbReference type="SMR" id="A4W3R7"/>
<dbReference type="KEGG" id="ssv:SSU98_1848"/>
<dbReference type="HOGENOM" id="CLU_006301_5_0_9"/>
<dbReference type="GO" id="GO:0005829">
    <property type="term" value="C:cytosol"/>
    <property type="evidence" value="ECO:0007669"/>
    <property type="project" value="TreeGrafter"/>
</dbReference>
<dbReference type="GO" id="GO:0005525">
    <property type="term" value="F:GTP binding"/>
    <property type="evidence" value="ECO:0007669"/>
    <property type="project" value="UniProtKB-KW"/>
</dbReference>
<dbReference type="GO" id="GO:0003924">
    <property type="term" value="F:GTPase activity"/>
    <property type="evidence" value="ECO:0007669"/>
    <property type="project" value="UniProtKB-UniRule"/>
</dbReference>
<dbReference type="GO" id="GO:0003743">
    <property type="term" value="F:translation initiation factor activity"/>
    <property type="evidence" value="ECO:0007669"/>
    <property type="project" value="UniProtKB-UniRule"/>
</dbReference>
<dbReference type="CDD" id="cd01887">
    <property type="entry name" value="IF2_eIF5B"/>
    <property type="match status" value="1"/>
</dbReference>
<dbReference type="CDD" id="cd03702">
    <property type="entry name" value="IF2_mtIF2_II"/>
    <property type="match status" value="1"/>
</dbReference>
<dbReference type="CDD" id="cd03692">
    <property type="entry name" value="mtIF2_IVc"/>
    <property type="match status" value="1"/>
</dbReference>
<dbReference type="FunFam" id="2.40.30.10:FF:000007">
    <property type="entry name" value="Translation initiation factor IF-2"/>
    <property type="match status" value="1"/>
</dbReference>
<dbReference type="FunFam" id="2.40.30.10:FF:000008">
    <property type="entry name" value="Translation initiation factor IF-2"/>
    <property type="match status" value="1"/>
</dbReference>
<dbReference type="FunFam" id="3.40.50.10050:FF:000001">
    <property type="entry name" value="Translation initiation factor IF-2"/>
    <property type="match status" value="1"/>
</dbReference>
<dbReference type="FunFam" id="3.40.50.300:FF:000019">
    <property type="entry name" value="Translation initiation factor IF-2"/>
    <property type="match status" value="1"/>
</dbReference>
<dbReference type="Gene3D" id="1.10.10.2480">
    <property type="match status" value="1"/>
</dbReference>
<dbReference type="Gene3D" id="3.40.50.300">
    <property type="entry name" value="P-loop containing nucleotide triphosphate hydrolases"/>
    <property type="match status" value="1"/>
</dbReference>
<dbReference type="Gene3D" id="2.40.30.10">
    <property type="entry name" value="Translation factors"/>
    <property type="match status" value="2"/>
</dbReference>
<dbReference type="Gene3D" id="3.40.50.10050">
    <property type="entry name" value="Translation initiation factor IF- 2, domain 3"/>
    <property type="match status" value="1"/>
</dbReference>
<dbReference type="HAMAP" id="MF_00100_B">
    <property type="entry name" value="IF_2_B"/>
    <property type="match status" value="1"/>
</dbReference>
<dbReference type="InterPro" id="IPR053905">
    <property type="entry name" value="EF-G-like_DII"/>
</dbReference>
<dbReference type="InterPro" id="IPR044145">
    <property type="entry name" value="IF2_II"/>
</dbReference>
<dbReference type="InterPro" id="IPR006847">
    <property type="entry name" value="IF2_N"/>
</dbReference>
<dbReference type="InterPro" id="IPR027417">
    <property type="entry name" value="P-loop_NTPase"/>
</dbReference>
<dbReference type="InterPro" id="IPR005225">
    <property type="entry name" value="Small_GTP-bd"/>
</dbReference>
<dbReference type="InterPro" id="IPR000795">
    <property type="entry name" value="T_Tr_GTP-bd_dom"/>
</dbReference>
<dbReference type="InterPro" id="IPR000178">
    <property type="entry name" value="TF_IF2_bacterial-like"/>
</dbReference>
<dbReference type="InterPro" id="IPR015760">
    <property type="entry name" value="TIF_IF2"/>
</dbReference>
<dbReference type="InterPro" id="IPR023115">
    <property type="entry name" value="TIF_IF2_dom3"/>
</dbReference>
<dbReference type="InterPro" id="IPR036925">
    <property type="entry name" value="TIF_IF2_dom3_sf"/>
</dbReference>
<dbReference type="InterPro" id="IPR009000">
    <property type="entry name" value="Transl_B-barrel_sf"/>
</dbReference>
<dbReference type="NCBIfam" id="TIGR00487">
    <property type="entry name" value="IF-2"/>
    <property type="match status" value="1"/>
</dbReference>
<dbReference type="NCBIfam" id="TIGR00231">
    <property type="entry name" value="small_GTP"/>
    <property type="match status" value="1"/>
</dbReference>
<dbReference type="PANTHER" id="PTHR43381:SF5">
    <property type="entry name" value="TR-TYPE G DOMAIN-CONTAINING PROTEIN"/>
    <property type="match status" value="1"/>
</dbReference>
<dbReference type="PANTHER" id="PTHR43381">
    <property type="entry name" value="TRANSLATION INITIATION FACTOR IF-2-RELATED"/>
    <property type="match status" value="1"/>
</dbReference>
<dbReference type="Pfam" id="PF22042">
    <property type="entry name" value="EF-G_D2"/>
    <property type="match status" value="1"/>
</dbReference>
<dbReference type="Pfam" id="PF00009">
    <property type="entry name" value="GTP_EFTU"/>
    <property type="match status" value="1"/>
</dbReference>
<dbReference type="Pfam" id="PF11987">
    <property type="entry name" value="IF-2"/>
    <property type="match status" value="1"/>
</dbReference>
<dbReference type="Pfam" id="PF04760">
    <property type="entry name" value="IF2_N"/>
    <property type="match status" value="2"/>
</dbReference>
<dbReference type="PRINTS" id="PR00449">
    <property type="entry name" value="RASTRNSFRMNG"/>
</dbReference>
<dbReference type="SUPFAM" id="SSF52156">
    <property type="entry name" value="Initiation factor IF2/eIF5b, domain 3"/>
    <property type="match status" value="1"/>
</dbReference>
<dbReference type="SUPFAM" id="SSF52540">
    <property type="entry name" value="P-loop containing nucleoside triphosphate hydrolases"/>
    <property type="match status" value="1"/>
</dbReference>
<dbReference type="SUPFAM" id="SSF50447">
    <property type="entry name" value="Translation proteins"/>
    <property type="match status" value="2"/>
</dbReference>
<dbReference type="PROSITE" id="PS51722">
    <property type="entry name" value="G_TR_2"/>
    <property type="match status" value="1"/>
</dbReference>
<dbReference type="PROSITE" id="PS01176">
    <property type="entry name" value="IF2"/>
    <property type="match status" value="1"/>
</dbReference>